<sequence>MKHFEANFDGLVGPTHNYAGLSFGNVASLSNAALVSNPKAAAKQGLQKAKALADMGMVQGMLAPQERPDLYTLRRIGFSGSDANVLKQAAKEAPMLLNACCSASSMWTANAATVSPSADTRDGKLHFTPANLVDKLHRSIEPLTTGRILTATFSDPHYFHHHSHLPEHNSFGDEGAANQTRLCNEYGHAGVELFVYGQEATNPNAPKPQKYPARQTLEASMAVARLHQLEEDNCVFIQQNPDVIDQGVFHNDVIAVGNQNVLFYHEQAFLNTQHKIDEIKRKLDTELYFIEVPTAKVAINDAVKSYLFNTQIITLPSGEMAIIAPTDCQENPAVFAYLNELLTLNTPIKQVLYFDVKQSMQNGGGPACLRLRVAMNEMEVAAVNQHTLMNDALFARLNLWVDKHYRDRLTTQDLADPQLIIESRTALDELTQIMKLGSVYQFQR</sequence>
<organism>
    <name type="scientific">Shewanella baltica (strain OS195)</name>
    <dbReference type="NCBI Taxonomy" id="399599"/>
    <lineage>
        <taxon>Bacteria</taxon>
        <taxon>Pseudomonadati</taxon>
        <taxon>Pseudomonadota</taxon>
        <taxon>Gammaproteobacteria</taxon>
        <taxon>Alteromonadales</taxon>
        <taxon>Shewanellaceae</taxon>
        <taxon>Shewanella</taxon>
    </lineage>
</organism>
<protein>
    <recommendedName>
        <fullName evidence="1">N-succinylarginine dihydrolase</fullName>
        <ecNumber evidence="1">3.5.3.23</ecNumber>
    </recommendedName>
</protein>
<proteinExistence type="inferred from homology"/>
<reference key="1">
    <citation type="submission" date="2007-11" db="EMBL/GenBank/DDBJ databases">
        <title>Complete sequence of chromosome of Shewanella baltica OS195.</title>
        <authorList>
            <consortium name="US DOE Joint Genome Institute"/>
            <person name="Copeland A."/>
            <person name="Lucas S."/>
            <person name="Lapidus A."/>
            <person name="Barry K."/>
            <person name="Glavina del Rio T."/>
            <person name="Dalin E."/>
            <person name="Tice H."/>
            <person name="Pitluck S."/>
            <person name="Chain P."/>
            <person name="Malfatti S."/>
            <person name="Shin M."/>
            <person name="Vergez L."/>
            <person name="Schmutz J."/>
            <person name="Larimer F."/>
            <person name="Land M."/>
            <person name="Hauser L."/>
            <person name="Kyrpides N."/>
            <person name="Kim E."/>
            <person name="Brettar I."/>
            <person name="Rodrigues J."/>
            <person name="Konstantinidis K."/>
            <person name="Klappenbach J."/>
            <person name="Hofle M."/>
            <person name="Tiedje J."/>
            <person name="Richardson P."/>
        </authorList>
    </citation>
    <scope>NUCLEOTIDE SEQUENCE [LARGE SCALE GENOMIC DNA]</scope>
    <source>
        <strain>OS195</strain>
    </source>
</reference>
<name>ASTB_SHEB9</name>
<gene>
    <name evidence="1" type="primary">astB</name>
    <name type="ordered locus">Sbal195_2610</name>
</gene>
<comment type="function">
    <text evidence="1">Catalyzes the hydrolysis of N(2)-succinylarginine into N(2)-succinylornithine, ammonia and CO(2).</text>
</comment>
<comment type="catalytic activity">
    <reaction evidence="1">
        <text>N(2)-succinyl-L-arginine + 2 H2O + 2 H(+) = N(2)-succinyl-L-ornithine + 2 NH4(+) + CO2</text>
        <dbReference type="Rhea" id="RHEA:19533"/>
        <dbReference type="ChEBI" id="CHEBI:15377"/>
        <dbReference type="ChEBI" id="CHEBI:15378"/>
        <dbReference type="ChEBI" id="CHEBI:16526"/>
        <dbReference type="ChEBI" id="CHEBI:28938"/>
        <dbReference type="ChEBI" id="CHEBI:58241"/>
        <dbReference type="ChEBI" id="CHEBI:58514"/>
        <dbReference type="EC" id="3.5.3.23"/>
    </reaction>
</comment>
<comment type="pathway">
    <text evidence="1">Amino-acid degradation; L-arginine degradation via AST pathway; L-glutamate and succinate from L-arginine: step 2/5.</text>
</comment>
<comment type="subunit">
    <text evidence="1">Homodimer.</text>
</comment>
<comment type="similarity">
    <text evidence="1">Belongs to the succinylarginine dihydrolase family.</text>
</comment>
<accession>A9L516</accession>
<feature type="chain" id="PRO_1000085397" description="N-succinylarginine dihydrolase">
    <location>
        <begin position="1"/>
        <end position="444"/>
    </location>
</feature>
<feature type="active site" evidence="1">
    <location>
        <position position="174"/>
    </location>
</feature>
<feature type="active site" evidence="1">
    <location>
        <position position="250"/>
    </location>
</feature>
<feature type="active site" description="Nucleophile" evidence="1">
    <location>
        <position position="368"/>
    </location>
</feature>
<feature type="binding site" evidence="1">
    <location>
        <begin position="19"/>
        <end position="28"/>
    </location>
    <ligand>
        <name>substrate</name>
    </ligand>
</feature>
<feature type="binding site" evidence="1">
    <location>
        <position position="110"/>
    </location>
    <ligand>
        <name>substrate</name>
    </ligand>
</feature>
<feature type="binding site" evidence="1">
    <location>
        <begin position="137"/>
        <end position="138"/>
    </location>
    <ligand>
        <name>substrate</name>
    </ligand>
</feature>
<feature type="binding site" evidence="1">
    <location>
        <position position="214"/>
    </location>
    <ligand>
        <name>substrate</name>
    </ligand>
</feature>
<feature type="binding site" evidence="1">
    <location>
        <position position="252"/>
    </location>
    <ligand>
        <name>substrate</name>
    </ligand>
</feature>
<feature type="binding site" evidence="1">
    <location>
        <position position="362"/>
    </location>
    <ligand>
        <name>substrate</name>
    </ligand>
</feature>
<evidence type="ECO:0000255" key="1">
    <source>
        <dbReference type="HAMAP-Rule" id="MF_01172"/>
    </source>
</evidence>
<keyword id="KW-0056">Arginine metabolism</keyword>
<keyword id="KW-0378">Hydrolase</keyword>
<dbReference type="EC" id="3.5.3.23" evidence="1"/>
<dbReference type="EMBL" id="CP000891">
    <property type="protein sequence ID" value="ABX49778.1"/>
    <property type="molecule type" value="Genomic_DNA"/>
</dbReference>
<dbReference type="RefSeq" id="WP_006086245.1">
    <property type="nucleotide sequence ID" value="NC_009997.1"/>
</dbReference>
<dbReference type="SMR" id="A9L516"/>
<dbReference type="GeneID" id="11772705"/>
<dbReference type="KEGG" id="sbn:Sbal195_2610"/>
<dbReference type="HOGENOM" id="CLU_053835_0_0_6"/>
<dbReference type="UniPathway" id="UPA00185">
    <property type="reaction ID" value="UER00280"/>
</dbReference>
<dbReference type="Proteomes" id="UP000000770">
    <property type="component" value="Chromosome"/>
</dbReference>
<dbReference type="GO" id="GO:0009015">
    <property type="term" value="F:N-succinylarginine dihydrolase activity"/>
    <property type="evidence" value="ECO:0007669"/>
    <property type="project" value="UniProtKB-UniRule"/>
</dbReference>
<dbReference type="GO" id="GO:0019544">
    <property type="term" value="P:arginine catabolic process to glutamate"/>
    <property type="evidence" value="ECO:0007669"/>
    <property type="project" value="UniProtKB-UniRule"/>
</dbReference>
<dbReference type="GO" id="GO:0019545">
    <property type="term" value="P:arginine catabolic process to succinate"/>
    <property type="evidence" value="ECO:0007669"/>
    <property type="project" value="UniProtKB-UniRule"/>
</dbReference>
<dbReference type="FunFam" id="3.75.10.20:FF:000001">
    <property type="entry name" value="N-succinylarginine dihydrolase"/>
    <property type="match status" value="1"/>
</dbReference>
<dbReference type="Gene3D" id="3.75.10.20">
    <property type="entry name" value="Succinylarginine dihydrolase"/>
    <property type="match status" value="1"/>
</dbReference>
<dbReference type="HAMAP" id="MF_01172">
    <property type="entry name" value="AstB"/>
    <property type="match status" value="1"/>
</dbReference>
<dbReference type="InterPro" id="IPR037031">
    <property type="entry name" value="AstB_sf"/>
</dbReference>
<dbReference type="InterPro" id="IPR007079">
    <property type="entry name" value="SuccinylArg_d-Hdrlase_AstB"/>
</dbReference>
<dbReference type="NCBIfam" id="TIGR03241">
    <property type="entry name" value="arg_catab_astB"/>
    <property type="match status" value="1"/>
</dbReference>
<dbReference type="NCBIfam" id="NF009789">
    <property type="entry name" value="PRK13281.1"/>
    <property type="match status" value="1"/>
</dbReference>
<dbReference type="PANTHER" id="PTHR30420">
    <property type="entry name" value="N-SUCCINYLARGININE DIHYDROLASE"/>
    <property type="match status" value="1"/>
</dbReference>
<dbReference type="PANTHER" id="PTHR30420:SF2">
    <property type="entry name" value="N-SUCCINYLARGININE DIHYDROLASE"/>
    <property type="match status" value="1"/>
</dbReference>
<dbReference type="Pfam" id="PF04996">
    <property type="entry name" value="AstB"/>
    <property type="match status" value="1"/>
</dbReference>
<dbReference type="SUPFAM" id="SSF55909">
    <property type="entry name" value="Pentein"/>
    <property type="match status" value="1"/>
</dbReference>